<organism>
    <name type="scientific">Escherichia coli (strain K12)</name>
    <dbReference type="NCBI Taxonomy" id="83333"/>
    <lineage>
        <taxon>Bacteria</taxon>
        <taxon>Pseudomonadati</taxon>
        <taxon>Pseudomonadota</taxon>
        <taxon>Gammaproteobacteria</taxon>
        <taxon>Enterobacterales</taxon>
        <taxon>Enterobacteriaceae</taxon>
        <taxon>Escherichia</taxon>
    </lineage>
</organism>
<sequence>MEDDCDIIIIGAGIAGTACALRCARAGLSVLLLERAEIPGSKNLSGGRLYTHALAELLPQFHLTAPLERRITHESLSLLTPDGVTTFSSLQPGGESWSVLRARFDPWLVAEAEKEGVECIPGATVDALYEENGRVCGVICGDDILRARYVVLAEGANSVLAERHGLVTRPAGEAMALGIKEVLSLETSAIEERFHLENNEGAALLFSGRICDDLPGGAFLYTNQQTLSLGIVCPLSSLTQSRVPASELLTRFKAHPAVRPLIKNTESLEYGAHLVPEGGLHSMPVQYAGNGWLLVGDALRSCVNTGISVRGMDMALTGAQAAAQTLISACQHREPQNLFPLYHHNVERSLLWDVLQRYQHVPALLQRPGWYRTWPALMQDISRDLWDQGDKPVPPLRQLFWHHLRRHGLWHLAGDVIRSLRCL</sequence>
<protein>
    <recommendedName>
        <fullName>Probable electron transfer flavoprotein-quinone oxidoreductase YgcN</fullName>
        <ecNumber>1.5.5.-</ecNumber>
    </recommendedName>
</protein>
<name>YGCN_ECOLI</name>
<reference key="1">
    <citation type="journal article" date="1997" name="Science">
        <title>The complete genome sequence of Escherichia coli K-12.</title>
        <authorList>
            <person name="Blattner F.R."/>
            <person name="Plunkett G. III"/>
            <person name="Bloch C.A."/>
            <person name="Perna N.T."/>
            <person name="Burland V."/>
            <person name="Riley M."/>
            <person name="Collado-Vides J."/>
            <person name="Glasner J.D."/>
            <person name="Rode C.K."/>
            <person name="Mayhew G.F."/>
            <person name="Gregor J."/>
            <person name="Davis N.W."/>
            <person name="Kirkpatrick H.A."/>
            <person name="Goeden M.A."/>
            <person name="Rose D.J."/>
            <person name="Mau B."/>
            <person name="Shao Y."/>
        </authorList>
    </citation>
    <scope>NUCLEOTIDE SEQUENCE [LARGE SCALE GENOMIC DNA]</scope>
    <source>
        <strain>K12 / MG1655 / ATCC 47076</strain>
    </source>
</reference>
<reference key="2">
    <citation type="journal article" date="2006" name="Mol. Syst. Biol.">
        <title>Highly accurate genome sequences of Escherichia coli K-12 strains MG1655 and W3110.</title>
        <authorList>
            <person name="Hayashi K."/>
            <person name="Morooka N."/>
            <person name="Yamamoto Y."/>
            <person name="Fujita K."/>
            <person name="Isono K."/>
            <person name="Choi S."/>
            <person name="Ohtsubo E."/>
            <person name="Baba T."/>
            <person name="Wanner B.L."/>
            <person name="Mori H."/>
            <person name="Horiuchi T."/>
        </authorList>
    </citation>
    <scope>NUCLEOTIDE SEQUENCE [LARGE SCALE GENOMIC DNA]</scope>
    <source>
        <strain>K12 / W3110 / ATCC 27325 / DSM 5911</strain>
    </source>
</reference>
<feature type="chain" id="PRO_0000200697" description="Probable electron transfer flavoprotein-quinone oxidoreductase YgcN">
    <location>
        <begin position="1"/>
        <end position="423"/>
    </location>
</feature>
<feature type="binding site" evidence="1">
    <location>
        <begin position="7"/>
        <end position="21"/>
    </location>
    <ligand>
        <name>FAD</name>
        <dbReference type="ChEBI" id="CHEBI:57692"/>
    </ligand>
</feature>
<accession>Q46904</accession>
<accession>Q2MA63</accession>
<comment type="function">
    <text>Probably accepts electrons from YgcQ/YgcR and reduces a quinone.</text>
</comment>
<comment type="cofactor">
    <cofactor evidence="2">
        <name>FAD</name>
        <dbReference type="ChEBI" id="CHEBI:57692"/>
    </cofactor>
</comment>
<comment type="similarity">
    <text evidence="2">Belongs to the ETF-QO/FixC family.</text>
</comment>
<comment type="sequence caution" evidence="2">
    <conflict type="erroneous initiation">
        <sequence resource="EMBL-CDS" id="AAA69276"/>
    </conflict>
    <text>Extended N-terminus.</text>
</comment>
<proteinExistence type="inferred from homology"/>
<keyword id="KW-0274">FAD</keyword>
<keyword id="KW-0285">Flavoprotein</keyword>
<keyword id="KW-0560">Oxidoreductase</keyword>
<keyword id="KW-1185">Reference proteome</keyword>
<evidence type="ECO:0000255" key="1"/>
<evidence type="ECO:0000305" key="2"/>
<gene>
    <name type="primary">ygcN</name>
    <name type="ordered locus">b2766</name>
    <name type="ordered locus">JW2736</name>
</gene>
<dbReference type="EC" id="1.5.5.-"/>
<dbReference type="EMBL" id="U29579">
    <property type="protein sequence ID" value="AAA69276.1"/>
    <property type="status" value="ALT_INIT"/>
    <property type="molecule type" value="Genomic_DNA"/>
</dbReference>
<dbReference type="EMBL" id="U00096">
    <property type="protein sequence ID" value="AAC75808.2"/>
    <property type="molecule type" value="Genomic_DNA"/>
</dbReference>
<dbReference type="EMBL" id="AP009048">
    <property type="protein sequence ID" value="BAE76843.1"/>
    <property type="molecule type" value="Genomic_DNA"/>
</dbReference>
<dbReference type="PIR" id="B65058">
    <property type="entry name" value="B65058"/>
</dbReference>
<dbReference type="RefSeq" id="NP_417246.4">
    <property type="nucleotide sequence ID" value="NC_000913.3"/>
</dbReference>
<dbReference type="RefSeq" id="WP_001301334.1">
    <property type="nucleotide sequence ID" value="NZ_LN832404.1"/>
</dbReference>
<dbReference type="SMR" id="Q46904"/>
<dbReference type="BioGRID" id="4262289">
    <property type="interactions" value="18"/>
</dbReference>
<dbReference type="FunCoup" id="Q46904">
    <property type="interactions" value="664"/>
</dbReference>
<dbReference type="IntAct" id="Q46904">
    <property type="interactions" value="3"/>
</dbReference>
<dbReference type="STRING" id="511145.b2766"/>
<dbReference type="PaxDb" id="511145-b2766"/>
<dbReference type="EnsemblBacteria" id="AAC75808">
    <property type="protein sequence ID" value="AAC75808"/>
    <property type="gene ID" value="b2766"/>
</dbReference>
<dbReference type="GeneID" id="946114"/>
<dbReference type="KEGG" id="ecj:JW2736"/>
<dbReference type="KEGG" id="eco:b2766"/>
<dbReference type="KEGG" id="ecoc:C3026_15200"/>
<dbReference type="PATRIC" id="fig|1411691.4.peg.3971"/>
<dbReference type="EchoBASE" id="EB2922"/>
<dbReference type="eggNOG" id="COG0644">
    <property type="taxonomic scope" value="Bacteria"/>
</dbReference>
<dbReference type="HOGENOM" id="CLU_050977_0_0_6"/>
<dbReference type="InParanoid" id="Q46904"/>
<dbReference type="OMA" id="HLEGTNM"/>
<dbReference type="OrthoDB" id="103324at2"/>
<dbReference type="PhylomeDB" id="Q46904"/>
<dbReference type="BioCyc" id="EcoCyc:G7432-MONOMER"/>
<dbReference type="PRO" id="PR:Q46904"/>
<dbReference type="Proteomes" id="UP000000625">
    <property type="component" value="Chromosome"/>
</dbReference>
<dbReference type="GO" id="GO:0005886">
    <property type="term" value="C:plasma membrane"/>
    <property type="evidence" value="ECO:0007005"/>
    <property type="project" value="EcoCyc"/>
</dbReference>
<dbReference type="GO" id="GO:0016491">
    <property type="term" value="F:oxidoreductase activity"/>
    <property type="evidence" value="ECO:0007669"/>
    <property type="project" value="UniProtKB-KW"/>
</dbReference>
<dbReference type="Gene3D" id="3.50.50.60">
    <property type="entry name" value="FAD/NAD(P)-binding domain"/>
    <property type="match status" value="1"/>
</dbReference>
<dbReference type="InterPro" id="IPR049398">
    <property type="entry name" value="ETF-QO/FixC_UQ-bd"/>
</dbReference>
<dbReference type="InterPro" id="IPR006076">
    <property type="entry name" value="FAD-dep_OxRdtase"/>
</dbReference>
<dbReference type="InterPro" id="IPR036188">
    <property type="entry name" value="FAD/NAD-bd_sf"/>
</dbReference>
<dbReference type="InterPro" id="IPR039651">
    <property type="entry name" value="FixC-like"/>
</dbReference>
<dbReference type="PANTHER" id="PTHR43624">
    <property type="entry name" value="ELECTRON TRANSFER FLAVOPROTEIN-QUINONE OXIDOREDUCTASE YDIS-RELATED"/>
    <property type="match status" value="1"/>
</dbReference>
<dbReference type="PANTHER" id="PTHR43624:SF2">
    <property type="entry name" value="ELECTRON TRANSFER FLAVOPROTEIN-QUINONE OXIDOREDUCTASE YDIS-RELATED"/>
    <property type="match status" value="1"/>
</dbReference>
<dbReference type="Pfam" id="PF01266">
    <property type="entry name" value="DAO"/>
    <property type="match status" value="1"/>
</dbReference>
<dbReference type="Pfam" id="PF21162">
    <property type="entry name" value="ETFQO_UQ-bd"/>
    <property type="match status" value="1"/>
</dbReference>
<dbReference type="PRINTS" id="PR00420">
    <property type="entry name" value="RNGMNOXGNASE"/>
</dbReference>
<dbReference type="SUPFAM" id="SSF54373">
    <property type="entry name" value="FAD-linked reductases, C-terminal domain"/>
    <property type="match status" value="1"/>
</dbReference>
<dbReference type="SUPFAM" id="SSF51905">
    <property type="entry name" value="FAD/NAD(P)-binding domain"/>
    <property type="match status" value="1"/>
</dbReference>